<proteinExistence type="inferred from homology"/>
<name>Y270_RICRS</name>
<dbReference type="EMBL" id="CP000848">
    <property type="protein sequence ID" value="ABV75650.1"/>
    <property type="molecule type" value="Genomic_DNA"/>
</dbReference>
<dbReference type="RefSeq" id="WP_012150274.1">
    <property type="nucleotide sequence ID" value="NZ_CP121767.1"/>
</dbReference>
<dbReference type="SMR" id="A8GQH5"/>
<dbReference type="GeneID" id="79936855"/>
<dbReference type="KEGG" id="rri:A1G_00270"/>
<dbReference type="HOGENOM" id="CLU_057596_1_0_5"/>
<dbReference type="Proteomes" id="UP000006832">
    <property type="component" value="Chromosome"/>
</dbReference>
<dbReference type="GO" id="GO:0005829">
    <property type="term" value="C:cytosol"/>
    <property type="evidence" value="ECO:0007669"/>
    <property type="project" value="TreeGrafter"/>
</dbReference>
<dbReference type="Gene3D" id="3.40.1740.10">
    <property type="entry name" value="VC0467-like"/>
    <property type="match status" value="1"/>
</dbReference>
<dbReference type="HAMAP" id="MF_00758">
    <property type="entry name" value="UPF0301"/>
    <property type="match status" value="1"/>
</dbReference>
<dbReference type="InterPro" id="IPR003774">
    <property type="entry name" value="AlgH-like"/>
</dbReference>
<dbReference type="NCBIfam" id="NF001268">
    <property type="entry name" value="PRK00228.1-4"/>
    <property type="match status" value="1"/>
</dbReference>
<dbReference type="PANTHER" id="PTHR30327">
    <property type="entry name" value="UNCHARACTERIZED PROTEIN YQGE"/>
    <property type="match status" value="1"/>
</dbReference>
<dbReference type="PANTHER" id="PTHR30327:SF1">
    <property type="entry name" value="UPF0301 PROTEIN YQGE"/>
    <property type="match status" value="1"/>
</dbReference>
<dbReference type="Pfam" id="PF02622">
    <property type="entry name" value="DUF179"/>
    <property type="match status" value="1"/>
</dbReference>
<dbReference type="SUPFAM" id="SSF143456">
    <property type="entry name" value="VC0467-like"/>
    <property type="match status" value="1"/>
</dbReference>
<evidence type="ECO:0000255" key="1">
    <source>
        <dbReference type="HAMAP-Rule" id="MF_00758"/>
    </source>
</evidence>
<reference key="1">
    <citation type="submission" date="2007-09" db="EMBL/GenBank/DDBJ databases">
        <title>Complete genome sequence of Rickettsia rickettsii.</title>
        <authorList>
            <person name="Madan A."/>
            <person name="Fahey J."/>
            <person name="Helton E."/>
            <person name="Ketteman M."/>
            <person name="Madan A."/>
            <person name="Rodrigues S."/>
            <person name="Sanchez A."/>
            <person name="Dasch G."/>
            <person name="Eremeeva M."/>
        </authorList>
    </citation>
    <scope>NUCLEOTIDE SEQUENCE [LARGE SCALE GENOMIC DNA]</scope>
    <source>
        <strain>Sheila Smith</strain>
    </source>
</reference>
<feature type="chain" id="PRO_1000046678" description="UPF0301 protein A1G_00270">
    <location>
        <begin position="1"/>
        <end position="189"/>
    </location>
</feature>
<comment type="similarity">
    <text evidence="1">Belongs to the UPF0301 (AlgH) family.</text>
</comment>
<gene>
    <name type="ordered locus">A1G_00270</name>
</gene>
<sequence>MSDKIFHNLSGKTLVATPHVITKGIYHKSLIYMLSHTEEGAIGLIFNRLVNHIDLKSFFKIKNDEITTPVMVPIYLGGPVEHEKGFFLHSSDYNKNLLLDFHNDLAVSSNLEISEDIAFGKGPKNSLFIVGYTAWKPGQLEEELETNLWLVMDCNKEFIFADNPESKWHNALKHLGIDEIHFSSQIGNA</sequence>
<protein>
    <recommendedName>
        <fullName evidence="1">UPF0301 protein A1G_00270</fullName>
    </recommendedName>
</protein>
<accession>A8GQH5</accession>
<organism>
    <name type="scientific">Rickettsia rickettsii (strain Sheila Smith)</name>
    <dbReference type="NCBI Taxonomy" id="392021"/>
    <lineage>
        <taxon>Bacteria</taxon>
        <taxon>Pseudomonadati</taxon>
        <taxon>Pseudomonadota</taxon>
        <taxon>Alphaproteobacteria</taxon>
        <taxon>Rickettsiales</taxon>
        <taxon>Rickettsiaceae</taxon>
        <taxon>Rickettsieae</taxon>
        <taxon>Rickettsia</taxon>
        <taxon>spotted fever group</taxon>
    </lineage>
</organism>